<gene>
    <name evidence="2" type="primary">vif</name>
</gene>
<comment type="function">
    <text evidence="2">Counteracts the innate antiviral activity of host APOBEC3F and APOBEC3G by promoting their ubiquitination and degradation. Acts as a substrate recognition component of an E3 ubiquitin-protein ligase complex: mechanistically, Vif hijacks a host cullin-5-RING E3 ubiquitin-protein ligase complex (ECS complex) and the transcription coactivator CBFB/CBF-beta to form an active E3 ubiquitin-protein ligase complex that targets APOBEC3G and APOBEC3F for polyubiquitination, leading to their degradation by the proteasome. Vif interaction with APOBEC3G also blocks its cytidine deaminase activity in a proteasome-independent manner, suggesting a dual inhibitory mechanism. May interact directly with APOBEC3G mRNA in order to inhibit its translation. Association with CBFB/CBF-beta also inhibits the transcription coactivator activity of CBFB/CBF-beta. Seems to play a role in viral morphology by affecting the stability of the viral nucleoprotein core. Finally, Vif also contributes to the G2 cell cycle arrest observed in HIV infected cells.</text>
</comment>
<comment type="subunit">
    <text evidence="1">Homomultimer; in vitro and presumably in vivo. Interacts with viral RNA and Pr55Gag precursor; these interactions mediate Vif incorporation into the virion. Interacts with the viral reverse transcriptase. Forms cullin-5-RING E3 ubiquitin-protein ligase complex (ECS complex) by interacting with host CUL5, RBX2, elongin BC complex (ELOB and ELOC) and CBFB/CBF-beta. Within the ECS complex, Vif interacts directly with host CUL5, ELOC and APOBEC (APOBEC3F and APOBEC3G) substrates. The ECS complex also contains some single-stranded RNA (ssRNA) that acts as a glue that bridges Vif with APOBEC (APOBEC3F and APOBEC3G) substrates. Interacts with host UBCE7IP1 isoform 3/ZIN and possibly with SAT. Interacts with host tyrosine kinases HCK and FYN; these interactions may decrease level of phosphorylated APOBEC3G incorporation into virions. Interacts with host ABCE1; this interaction may play a role in protecting viral RNA from damage during viral assembly. Interacts with host MDM2; this interaction targets Vif for degradation by the proteasome.</text>
</comment>
<comment type="subcellular location">
    <subcellularLocation>
        <location evidence="2">Host cytoplasm</location>
    </subcellularLocation>
    <subcellularLocation>
        <location evidence="2">Host cell membrane</location>
        <topology evidence="2">Peripheral membrane protein</topology>
        <orientation evidence="2">Cytoplasmic side</orientation>
    </subcellularLocation>
    <subcellularLocation>
        <location evidence="2">Virion</location>
    </subcellularLocation>
    <text evidence="2">In the cytoplasm, seems to colocalize with intermediate filament vimentin. A fraction is associated with the cytoplasmic side of cellular membranes, presumably via the interaction with Pr55Gag precursor. Incorporated in virions at a ratio of approximately 7 to 20 molecules per virion.</text>
</comment>
<comment type="induction">
    <text evidence="2">Expressed late during infection in a Rev-dependent manner.</text>
</comment>
<comment type="domain">
    <text evidence="2">The BC-like-box motif mediates the interaction with elongin BC complex.</text>
</comment>
<comment type="domain">
    <text evidence="2">The HCCH motif (H-x(5)-C-x(18)-C-x(5)-H) mediates the interaction with CUL5.</text>
</comment>
<comment type="PTM">
    <text evidence="2">Processed in virion by the viral protease.</text>
</comment>
<comment type="PTM">
    <text evidence="2">Highly phosphorylated on serine and threonine residues.</text>
</comment>
<comment type="PTM">
    <text evidence="2">Polyubiquitinated and degraded by the proteasome in the presence of APOBEC3G.</text>
</comment>
<comment type="miscellaneous">
    <text evidence="2">Vif-defective viruses show catastrophic failure in reverse transcription due to APOBEC-induced mutations that initiate a DNA base repair pathway and compromise the structural integrity of the ssDNA. In the absence of Vif, the virion is morphologically abnormal.</text>
</comment>
<comment type="miscellaneous">
    <text evidence="2">HIV-1 lineages are divided in three main groups, M (for Major), O (for Outlier), and N (for New, or Non-M, Non-O). The vast majority of strains found worldwide belong to the group M. Group O seems to be endemic to and largely confined to Cameroon and neighboring countries in West Central Africa, where these viruses represent a small minority of HIV-1 strains. The group N is represented by a limited number of isolates from Cameroonian persons. The group M is further subdivided in 9 clades or subtypes (A to D, F to H, J and K).</text>
</comment>
<comment type="miscellaneous">
    <text evidence="2">Required for replication in 'nonpermissive' cells, including primary T-cells, macrophages and certain T-cell lines, but is dispensable for replication in 'permissive' cell lines, such as 293T cells. In nonpermissive cells, Vif-defective viruses can produce virions, but they fail to complete reverse transcription and cannot successfully infect new cells.</text>
</comment>
<comment type="similarity">
    <text evidence="2">Belongs to the primate lentivirus group Vif protein family.</text>
</comment>
<sequence length="192" mass="22798">MENRWQVMIVWQVDRMKIRTWNSLVKHHMYVSKKAQGWFYRHHYESRHSRVSSEVHIPLGEARLVVRTYWGLHTGEKDWHLGHGVSIEWRLKRYSTQVDPDLADHLIHLHYFDCFSESAIRRAILGQIVRPRCEYQAGHNKVGSLQYLALKALVTPTRAKPPLPSVKKLTEDRWNKPQKTRGHRGSRTLNRH</sequence>
<name>VIF_HV1U4</name>
<organism>
    <name type="scientific">Human immunodeficiency virus type 1 group M subtype A (isolate U455)</name>
    <name type="common">HIV-1</name>
    <dbReference type="NCBI Taxonomy" id="11703"/>
    <lineage>
        <taxon>Viruses</taxon>
        <taxon>Riboviria</taxon>
        <taxon>Pararnavirae</taxon>
        <taxon>Artverviricota</taxon>
        <taxon>Revtraviricetes</taxon>
        <taxon>Ortervirales</taxon>
        <taxon>Retroviridae</taxon>
        <taxon>Orthoretrovirinae</taxon>
        <taxon>Lentivirus</taxon>
        <taxon>Human immunodeficiency virus type 1</taxon>
    </lineage>
</organism>
<feature type="chain" id="PRO_0000043065" description="Virion infectivity factor" evidence="2">
    <location>
        <begin position="1"/>
        <end position="192"/>
    </location>
</feature>
<feature type="chain" id="PRO_0000043066" description="p17" evidence="2">
    <location>
        <begin position="1"/>
        <end position="150"/>
    </location>
</feature>
<feature type="chain" id="PRO_0000043067" description="p7" evidence="2">
    <location>
        <begin position="151"/>
        <end position="192"/>
    </location>
</feature>
<feature type="region of interest" description="Interaction with host APOBEC3F; F1-box" evidence="2">
    <location>
        <begin position="14"/>
        <end position="17"/>
    </location>
</feature>
<feature type="region of interest" description="Interaction with host APOBEC3G; G-box" evidence="2">
    <location>
        <begin position="40"/>
        <end position="44"/>
    </location>
</feature>
<feature type="region of interest" description="Interaction with host APOBEC3F and APOBEC3G; FG-box" evidence="2">
    <location>
        <begin position="54"/>
        <end position="72"/>
    </location>
</feature>
<feature type="region of interest" description="Interaction with host APOBEC3F; F2-box" evidence="2">
    <location>
        <begin position="74"/>
        <end position="79"/>
    </location>
</feature>
<feature type="region of interest" description="RNA-binding" evidence="2">
    <location>
        <begin position="75"/>
        <end position="114"/>
    </location>
</feature>
<feature type="region of interest" description="SOCS box-like" evidence="2">
    <location>
        <begin position="151"/>
        <end position="180"/>
    </location>
</feature>
<feature type="region of interest" description="Multimerization" evidence="2">
    <location>
        <begin position="151"/>
        <end position="164"/>
    </location>
</feature>
<feature type="region of interest" description="Disordered" evidence="3">
    <location>
        <begin position="159"/>
        <end position="192"/>
    </location>
</feature>
<feature type="region of interest" description="Membrane association" evidence="2">
    <location>
        <begin position="171"/>
        <end position="172"/>
    </location>
</feature>
<feature type="short sequence motif" description="HCCH motif" evidence="2">
    <location>
        <begin position="108"/>
        <end position="139"/>
    </location>
</feature>
<feature type="short sequence motif" description="BC-box-like motif" evidence="2">
    <location>
        <begin position="144"/>
        <end position="153"/>
    </location>
</feature>
<feature type="compositionally biased region" description="Basic residues" evidence="3">
    <location>
        <begin position="176"/>
        <end position="192"/>
    </location>
</feature>
<feature type="binding site" evidence="2">
    <location>
        <position position="108"/>
    </location>
    <ligand>
        <name>Zn(2+)</name>
        <dbReference type="ChEBI" id="CHEBI:29105"/>
    </ligand>
</feature>
<feature type="binding site" evidence="2">
    <location>
        <position position="114"/>
    </location>
    <ligand>
        <name>Zn(2+)</name>
        <dbReference type="ChEBI" id="CHEBI:29105"/>
    </ligand>
</feature>
<feature type="binding site" evidence="2">
    <location>
        <position position="133"/>
    </location>
    <ligand>
        <name>Zn(2+)</name>
        <dbReference type="ChEBI" id="CHEBI:29105"/>
    </ligand>
</feature>
<feature type="binding site" evidence="2">
    <location>
        <position position="139"/>
    </location>
    <ligand>
        <name>Zn(2+)</name>
        <dbReference type="ChEBI" id="CHEBI:29105"/>
    </ligand>
</feature>
<feature type="site" description="Cleavage in virion (by viral protease)" evidence="2">
    <location>
        <begin position="150"/>
        <end position="151"/>
    </location>
</feature>
<feature type="modified residue" description="Phosphothreonine; by host MAP4K1" evidence="2">
    <location>
        <position position="96"/>
    </location>
</feature>
<feature type="modified residue" description="Phosphoserine; by host" evidence="2">
    <location>
        <position position="144"/>
    </location>
</feature>
<feature type="modified residue" description="Phosphothreonine; by host" evidence="2">
    <location>
        <position position="155"/>
    </location>
</feature>
<feature type="modified residue" description="Phosphoserine; by host MAP4K1" evidence="2">
    <location>
        <position position="165"/>
    </location>
</feature>
<feature type="modified residue" description="Phosphothreonine; by host" evidence="2">
    <location>
        <position position="188"/>
    </location>
</feature>
<proteinExistence type="inferred from homology"/>
<dbReference type="EMBL" id="M62320">
    <property type="protein sequence ID" value="AAA75020.1"/>
    <property type="molecule type" value="Genomic_DNA"/>
</dbReference>
<dbReference type="SMR" id="P24737"/>
<dbReference type="Proteomes" id="UP000134285">
    <property type="component" value="Segment"/>
</dbReference>
<dbReference type="GO" id="GO:0030430">
    <property type="term" value="C:host cell cytoplasm"/>
    <property type="evidence" value="ECO:0007669"/>
    <property type="project" value="UniProtKB-SubCell"/>
</dbReference>
<dbReference type="GO" id="GO:0020002">
    <property type="term" value="C:host cell plasma membrane"/>
    <property type="evidence" value="ECO:0007669"/>
    <property type="project" value="UniProtKB-SubCell"/>
</dbReference>
<dbReference type="GO" id="GO:0016020">
    <property type="term" value="C:membrane"/>
    <property type="evidence" value="ECO:0007669"/>
    <property type="project" value="UniProtKB-UniRule"/>
</dbReference>
<dbReference type="GO" id="GO:0044423">
    <property type="term" value="C:virion component"/>
    <property type="evidence" value="ECO:0007669"/>
    <property type="project" value="UniProtKB-UniRule"/>
</dbReference>
<dbReference type="GO" id="GO:0046872">
    <property type="term" value="F:metal ion binding"/>
    <property type="evidence" value="ECO:0007669"/>
    <property type="project" value="UniProtKB-KW"/>
</dbReference>
<dbReference type="GO" id="GO:0003723">
    <property type="term" value="F:RNA binding"/>
    <property type="evidence" value="ECO:0007669"/>
    <property type="project" value="UniProtKB-UniRule"/>
</dbReference>
<dbReference type="GO" id="GO:0019058">
    <property type="term" value="P:viral life cycle"/>
    <property type="evidence" value="ECO:0007669"/>
    <property type="project" value="InterPro"/>
</dbReference>
<dbReference type="HAMAP" id="MF_04081">
    <property type="entry name" value="HIV_VIF"/>
    <property type="match status" value="1"/>
</dbReference>
<dbReference type="InterPro" id="IPR000475">
    <property type="entry name" value="Vif"/>
</dbReference>
<dbReference type="Pfam" id="PF00559">
    <property type="entry name" value="Vif"/>
    <property type="match status" value="1"/>
</dbReference>
<dbReference type="PRINTS" id="PR00349">
    <property type="entry name" value="VIRIONINFFCT"/>
</dbReference>
<evidence type="ECO:0000250" key="1">
    <source>
        <dbReference type="UniProtKB" id="O70897"/>
    </source>
</evidence>
<evidence type="ECO:0000255" key="2">
    <source>
        <dbReference type="HAMAP-Rule" id="MF_04081"/>
    </source>
</evidence>
<evidence type="ECO:0000256" key="3">
    <source>
        <dbReference type="SAM" id="MobiDB-lite"/>
    </source>
</evidence>
<protein>
    <recommendedName>
        <fullName evidence="2">Virion infectivity factor</fullName>
        <shortName evidence="2">Vif</shortName>
    </recommendedName>
    <alternativeName>
        <fullName evidence="2">SOR protein</fullName>
    </alternativeName>
    <component>
        <recommendedName>
            <fullName evidence="2">p17</fullName>
        </recommendedName>
    </component>
    <component>
        <recommendedName>
            <fullName evidence="2">p7</fullName>
        </recommendedName>
    </component>
</protein>
<organismHost>
    <name type="scientific">Homo sapiens</name>
    <name type="common">Human</name>
    <dbReference type="NCBI Taxonomy" id="9606"/>
</organismHost>
<keyword id="KW-0014">AIDS</keyword>
<keyword id="KW-1032">Host cell membrane</keyword>
<keyword id="KW-1035">Host cytoplasm</keyword>
<keyword id="KW-1043">Host membrane</keyword>
<keyword id="KW-0945">Host-virus interaction</keyword>
<keyword id="KW-0472">Membrane</keyword>
<keyword id="KW-0479">Metal-binding</keyword>
<keyword id="KW-0597">Phosphoprotein</keyword>
<keyword id="KW-1185">Reference proteome</keyword>
<keyword id="KW-0694">RNA-binding</keyword>
<keyword id="KW-0832">Ubl conjugation</keyword>
<keyword id="KW-0833">Ubl conjugation pathway</keyword>
<keyword id="KW-0946">Virion</keyword>
<keyword id="KW-0862">Zinc</keyword>
<reference key="1">
    <citation type="journal article" date="1990" name="AIDS Res. Hum. Retroviruses">
        <title>Nucleotide sequence of a Ugandan HIV-1 provirus reveals genetic diversity from other HIV-1 isolates.</title>
        <authorList>
            <person name="Oram J.D."/>
            <person name="Downing R.G."/>
            <person name="Roff M."/>
            <person name="Clegg J.C.S."/>
            <person name="Serwadda D."/>
            <person name="Carswell J.W."/>
        </authorList>
    </citation>
    <scope>NUCLEOTIDE SEQUENCE [GENOMIC DNA]</scope>
</reference>
<reference key="2">
    <citation type="journal article" date="2004" name="Trends Mol. Med.">
        <title>The viral infectivity factor (Vif) of HIV-1 unveiled.</title>
        <authorList>
            <person name="Rose K.M."/>
            <person name="Marin M."/>
            <person name="Kozak S.L."/>
            <person name="Kabat D."/>
        </authorList>
    </citation>
    <scope>REVIEW</scope>
</reference>
<accession>P24737</accession>